<organismHost>
    <name type="scientific">Homo sapiens</name>
    <name type="common">Human</name>
    <dbReference type="NCBI Taxonomy" id="9606"/>
</organismHost>
<comment type="function">
    <text evidence="1">Component of the molecular motor that translocates viral genomic DNA in empty capsid during DNA packaging. Forms a tripartite terminase complex together with TRM2 and TRM3 in the host cytoplasm. Once the complex reaches the host nucleus, it interacts with the capsid portal vertex. This portal forms a ring in which genomic DNA is translocated into the capsid. TRM1 carries an endonuclease activity that plays an important role for the cleavage of concatemeric viral DNA into unit length genomes.</text>
</comment>
<comment type="subunit">
    <text evidence="1">Associates with TRM2 and TRM3 to form the tripartite terminase complex. Interacts with portal protein.</text>
</comment>
<comment type="subcellular location">
    <subcellularLocation>
        <location evidence="1">Host nucleus</location>
    </subcellularLocation>
    <text evidence="1">Found associated with the external surface of the viral capsid during assembly and DNA packaging, but seems absent in extracellular mature virions.</text>
</comment>
<comment type="similarity">
    <text evidence="1">Belongs to the herpesviridae TRM1 protein family.</text>
</comment>
<protein>
    <recommendedName>
        <fullName evidence="1">Tripartite terminase subunit 1</fullName>
    </recommendedName>
</protein>
<organism>
    <name type="scientific">Human herpesvirus 8 type P (isolate GK18)</name>
    <name type="common">HHV-8</name>
    <name type="synonym">Kaposi's sarcoma-associated herpesvirus</name>
    <dbReference type="NCBI Taxonomy" id="868565"/>
    <lineage>
        <taxon>Viruses</taxon>
        <taxon>Duplodnaviria</taxon>
        <taxon>Heunggongvirae</taxon>
        <taxon>Peploviricota</taxon>
        <taxon>Herviviricetes</taxon>
        <taxon>Herpesvirales</taxon>
        <taxon>Orthoherpesviridae</taxon>
        <taxon>Gammaherpesvirinae</taxon>
        <taxon>Rhadinovirus</taxon>
        <taxon>Rhadinovirus humangamma8</taxon>
        <taxon>Human herpesvirus 8</taxon>
    </lineage>
</organism>
<dbReference type="EMBL" id="AF148805">
    <property type="protein sequence ID" value="ABD28850.1"/>
    <property type="molecule type" value="Genomic_DNA"/>
</dbReference>
<dbReference type="RefSeq" id="YP_001129353.1">
    <property type="nucleotide sequence ID" value="NC_009333.1"/>
</dbReference>
<dbReference type="SMR" id="Q2HRD2"/>
<dbReference type="DNASU" id="4961505"/>
<dbReference type="GeneID" id="4961505"/>
<dbReference type="KEGG" id="vg:4961505"/>
<dbReference type="Proteomes" id="UP000000942">
    <property type="component" value="Segment"/>
</dbReference>
<dbReference type="GO" id="GO:0042025">
    <property type="term" value="C:host cell nucleus"/>
    <property type="evidence" value="ECO:0007669"/>
    <property type="project" value="UniProtKB-SubCell"/>
</dbReference>
<dbReference type="GO" id="GO:0005524">
    <property type="term" value="F:ATP binding"/>
    <property type="evidence" value="ECO:0007669"/>
    <property type="project" value="UniProtKB-KW"/>
</dbReference>
<dbReference type="GO" id="GO:0008270">
    <property type="term" value="F:zinc ion binding"/>
    <property type="evidence" value="ECO:0007669"/>
    <property type="project" value="UniProtKB-KW"/>
</dbReference>
<dbReference type="GO" id="GO:0019073">
    <property type="term" value="P:viral DNA genome packaging"/>
    <property type="evidence" value="ECO:0007669"/>
    <property type="project" value="InterPro"/>
</dbReference>
<dbReference type="HAMAP" id="MF_04014">
    <property type="entry name" value="HSV_TRM1"/>
    <property type="match status" value="1"/>
</dbReference>
<dbReference type="InterPro" id="IPR000501">
    <property type="entry name" value="UL28/UL56"/>
</dbReference>
<dbReference type="Pfam" id="PF01366">
    <property type="entry name" value="PRTP"/>
    <property type="match status" value="1"/>
</dbReference>
<keyword id="KW-0067">ATP-binding</keyword>
<keyword id="KW-1048">Host nucleus</keyword>
<keyword id="KW-0426">Late protein</keyword>
<keyword id="KW-0479">Metal-binding</keyword>
<keyword id="KW-0547">Nucleotide-binding</keyword>
<keyword id="KW-1185">Reference proteome</keyword>
<keyword id="KW-0231">Viral genome packaging</keyword>
<keyword id="KW-1188">Viral release from host cell</keyword>
<keyword id="KW-0862">Zinc</keyword>
<keyword id="KW-0863">Zinc-finger</keyword>
<evidence type="ECO:0000255" key="1">
    <source>
        <dbReference type="HAMAP-Rule" id="MF_04014"/>
    </source>
</evidence>
<sequence length="695" mass="78386">MAKELAAVYADVSALAMDLCLLSYADPATLDTKSLALTTGKFQSLHGTLLPLLRRQNAHECSGLSLELEHLLENVADALTTLGVCTSRKLSPEEHFSLLHLDITCNKHRSVRFNFYGNWALELKLSLINDVEIFFKRLSSVFYCIGSGSALEGLGEVLRFVGKLRGISPVPGPDLYVSNLPCLECLQEVCLTPNQGTSLQAMLPDTACSHICTPACGEPVRGLFENELKQLGLQTPESIPTTPCQSRVRQDDEIRQSSLMAVGDHHIFGEVTRSVLEISNLIYWSSGHSDATCDGDRDCSHLASLFTHEADMHKRRVDLAGCLGERGTPKHFFDCFRPDSLETLFCGGLFSSVEDTIESLQKDCSSAFYQQVNYTTALQKQNEFYVRLSKLLAAGQLNLGKCSTESCPSEARRQLVGGDKPEEVLRDAKHRQELYLQKVARDGFKKLSDCIRHQGHILSQTLGLRLWGSVIYNEASALQNHFLHRAQFISLPWQDLTVDCPTRFENSKYIKNSLYCQRLGREHVEILTLEFYKLITGPLSKRHTLFPSPPNVTLAQCFEAAGMLPHQKMMVSEMIWPSIEPKDWIEPNFNQFYSFENQDINHLQKRAWEYIRELVLSVSLYNRTWERELKILLTPQGSPGFKEPKPAGLTTGLYLTFETSAPLVLVDKKYGWIFKDLYALLYHHLQLSNHNDSQV</sequence>
<reference key="1">
    <citation type="journal article" date="1999" name="J. Virol.">
        <title>Identification of a spliced gene from Kaposi's sarcoma-associated herpesvirus encoding a protein with similarities to latent membrane proteins 1 and 2A of Epstein-Barr virus.</title>
        <authorList>
            <person name="Glenn M."/>
            <person name="Rainbow L."/>
            <person name="Aurade F."/>
            <person name="Davison A."/>
            <person name="Schulz T.F."/>
        </authorList>
    </citation>
    <scope>NUCLEOTIDE SEQUENCE [LARGE SCALE GENOMIC DNA]</scope>
</reference>
<reference key="2">
    <citation type="journal article" date="2006" name="J. Gen. Virol.">
        <title>Kaposi's sarcoma-associated herpesvirus immune modulation: an overview.</title>
        <authorList>
            <person name="Rezaee S.A.R."/>
            <person name="Cunningham C."/>
            <person name="Davison A.J."/>
            <person name="Blackbourn D.J."/>
        </authorList>
    </citation>
    <scope>NUCLEOTIDE SEQUENCE [LARGE SCALE GENOMIC DNA]</scope>
</reference>
<gene>
    <name evidence="1" type="primary">TRM1</name>
    <name type="ordered locus">ORF7</name>
</gene>
<accession>Q2HRD2</accession>
<proteinExistence type="inferred from homology"/>
<feature type="chain" id="PRO_0000423882" description="Tripartite terminase subunit 1">
    <location>
        <begin position="1"/>
        <end position="695"/>
    </location>
</feature>
<feature type="zinc finger region" description="C3H1-type" evidence="1">
    <location>
        <begin position="182"/>
        <end position="210"/>
    </location>
</feature>
<feature type="binding site" evidence="1">
    <location>
        <begin position="621"/>
        <end position="628"/>
    </location>
    <ligand>
        <name>ATP</name>
        <dbReference type="ChEBI" id="CHEBI:30616"/>
    </ligand>
</feature>
<name>TRM1_HHV8P</name>